<feature type="chain" id="PRO_0000124648" description="Dihydrodiol dehydrogenase 3">
    <location>
        <begin position="1"/>
        <end position="323"/>
    </location>
</feature>
<feature type="active site" description="Proton donor" evidence="1">
    <location>
        <position position="55"/>
    </location>
</feature>
<feature type="binding site" evidence="1">
    <location>
        <begin position="20"/>
        <end position="24"/>
    </location>
    <ligand>
        <name>NADP(+)</name>
        <dbReference type="ChEBI" id="CHEBI:58349"/>
    </ligand>
</feature>
<feature type="binding site" evidence="1">
    <location>
        <position position="50"/>
    </location>
    <ligand>
        <name>NADP(+)</name>
        <dbReference type="ChEBI" id="CHEBI:58349"/>
    </ligand>
</feature>
<feature type="binding site" evidence="1">
    <location>
        <position position="117"/>
    </location>
    <ligand>
        <name>substrate</name>
    </ligand>
</feature>
<feature type="binding site" evidence="1">
    <location>
        <begin position="166"/>
        <end position="167"/>
    </location>
    <ligand>
        <name>NADP(+)</name>
        <dbReference type="ChEBI" id="CHEBI:58349"/>
    </ligand>
</feature>
<feature type="binding site" evidence="1">
    <location>
        <position position="190"/>
    </location>
    <ligand>
        <name>NADP(+)</name>
        <dbReference type="ChEBI" id="CHEBI:58349"/>
    </ligand>
</feature>
<feature type="binding site" evidence="1">
    <location>
        <begin position="216"/>
        <end position="221"/>
    </location>
    <ligand>
        <name>NADP(+)</name>
        <dbReference type="ChEBI" id="CHEBI:58349"/>
    </ligand>
</feature>
<feature type="binding site" evidence="1">
    <location>
        <begin position="270"/>
        <end position="280"/>
    </location>
    <ligand>
        <name>NADP(+)</name>
        <dbReference type="ChEBI" id="CHEBI:58349"/>
    </ligand>
</feature>
<feature type="site" description="Lowers pKa of active site Tyr" evidence="1">
    <location>
        <position position="84"/>
    </location>
</feature>
<keyword id="KW-0963">Cytoplasm</keyword>
<keyword id="KW-0521">NADP</keyword>
<keyword id="KW-0560">Oxidoreductase</keyword>
<keyword id="KW-1185">Reference proteome</keyword>
<sequence>MDPKGQRVKLNDGHFIPVLGFGTFAPREVPKSEALEVTKFAIEAGFRHIDSAHLYQNEEQVGQAIRSKIADGTVKREDIFYTSKLWSTSLRPELVRPALEKSLNNLQLDYVDLYIIHFPVALKPGETLFPTDENGKPIFDSVDLCRTWEALEKCKDAGLTKSIGVSNFNHKQLEKILNKPGLKYKPVCNQVECHPYFNQSKLLDFCKSHDIVLVAYGALGSQRLKEWVNPNLPFLLEDPVLSAIAKKHRQTPALVALRYQIQRGVVVLAKSYNKKRIKENIQVFDFELTPEDMKAIDGLNSNMRYNELLLGVGHPEYPFVEEY</sequence>
<name>DDBX_BOVIN</name>
<dbReference type="EC" id="1.-.-.-"/>
<dbReference type="EMBL" id="D49542">
    <property type="protein sequence ID" value="BAA08493.1"/>
    <property type="molecule type" value="mRNA"/>
</dbReference>
<dbReference type="EMBL" id="D88749">
    <property type="protein sequence ID" value="BAA13690.1"/>
    <property type="molecule type" value="mRNA"/>
</dbReference>
<dbReference type="EMBL" id="BC112519">
    <property type="protein sequence ID" value="AAI12520.1"/>
    <property type="molecule type" value="mRNA"/>
</dbReference>
<dbReference type="RefSeq" id="NP_851370.1">
    <property type="nucleotide sequence ID" value="NM_181027.2"/>
</dbReference>
<dbReference type="SMR" id="P52898"/>
<dbReference type="FunCoup" id="P52898">
    <property type="interactions" value="125"/>
</dbReference>
<dbReference type="STRING" id="9913.ENSBTAP00000014044"/>
<dbReference type="PaxDb" id="9913-ENSBTAP00000014044"/>
<dbReference type="PeptideAtlas" id="P52898"/>
<dbReference type="Ensembl" id="ENSBTAT00000014044.4">
    <property type="protein sequence ID" value="ENSBTAP00000014044.2"/>
    <property type="gene ID" value="ENSBTAG00000058245.1"/>
</dbReference>
<dbReference type="GeneID" id="282138"/>
<dbReference type="KEGG" id="bta:282138"/>
<dbReference type="CTD" id="1109"/>
<dbReference type="VEuPathDB" id="HostDB:ENSBTAG00000022564"/>
<dbReference type="eggNOG" id="KOG1577">
    <property type="taxonomic scope" value="Eukaryota"/>
</dbReference>
<dbReference type="GeneTree" id="ENSGT00940000153677"/>
<dbReference type="InParanoid" id="P52898"/>
<dbReference type="OMA" id="MHWPASL"/>
<dbReference type="OrthoDB" id="416253at2759"/>
<dbReference type="TreeFam" id="TF106492"/>
<dbReference type="Reactome" id="R-BTA-193368">
    <property type="pathway name" value="Synthesis of bile acids and bile salts via 7alpha-hydroxycholesterol"/>
</dbReference>
<dbReference type="Reactome" id="R-BTA-193775">
    <property type="pathway name" value="Synthesis of bile acids and bile salts via 24-hydroxycholesterol"/>
</dbReference>
<dbReference type="Reactome" id="R-BTA-193807">
    <property type="pathway name" value="Synthesis of bile acids and bile salts via 27-hydroxycholesterol"/>
</dbReference>
<dbReference type="Reactome" id="R-BTA-2162123">
    <property type="pathway name" value="Synthesis of Prostaglandins (PG) and Thromboxanes (TX)"/>
</dbReference>
<dbReference type="Reactome" id="R-BTA-5365859">
    <property type="pathway name" value="RA biosynthesis pathway"/>
</dbReference>
<dbReference type="Reactome" id="R-BTA-975634">
    <property type="pathway name" value="Retinoid metabolism and transport"/>
</dbReference>
<dbReference type="Reactome" id="R-BTA-9757110">
    <property type="pathway name" value="Prednisone ADME"/>
</dbReference>
<dbReference type="Proteomes" id="UP000009136">
    <property type="component" value="Chromosome 13"/>
</dbReference>
<dbReference type="Bgee" id="ENSBTAG00000022564">
    <property type="expression patterns" value="Expressed in liver and 88 other cell types or tissues"/>
</dbReference>
<dbReference type="GO" id="GO:0005829">
    <property type="term" value="C:cytosol"/>
    <property type="evidence" value="ECO:0000318"/>
    <property type="project" value="GO_Central"/>
</dbReference>
<dbReference type="GO" id="GO:0004032">
    <property type="term" value="F:aldose reductase (NADPH) activity"/>
    <property type="evidence" value="ECO:0000318"/>
    <property type="project" value="GO_Central"/>
</dbReference>
<dbReference type="GO" id="GO:0047023">
    <property type="term" value="F:androsterone dehydrogenase [NAD(P)+] activity"/>
    <property type="evidence" value="ECO:0000318"/>
    <property type="project" value="GO_Central"/>
</dbReference>
<dbReference type="GO" id="GO:0032052">
    <property type="term" value="F:bile acid binding"/>
    <property type="evidence" value="ECO:0000318"/>
    <property type="project" value="GO_Central"/>
</dbReference>
<dbReference type="GO" id="GO:0047086">
    <property type="term" value="F:ketosteroid monooxygenase activity"/>
    <property type="evidence" value="ECO:0000318"/>
    <property type="project" value="GO_Central"/>
</dbReference>
<dbReference type="GO" id="GO:0044597">
    <property type="term" value="P:daunorubicin metabolic process"/>
    <property type="evidence" value="ECO:0000318"/>
    <property type="project" value="GO_Central"/>
</dbReference>
<dbReference type="GO" id="GO:0044598">
    <property type="term" value="P:doxorubicin metabolic process"/>
    <property type="evidence" value="ECO:0000318"/>
    <property type="project" value="GO_Central"/>
</dbReference>
<dbReference type="GO" id="GO:0042448">
    <property type="term" value="P:progesterone metabolic process"/>
    <property type="evidence" value="ECO:0000318"/>
    <property type="project" value="GO_Central"/>
</dbReference>
<dbReference type="GO" id="GO:0006693">
    <property type="term" value="P:prostaglandin metabolic process"/>
    <property type="evidence" value="ECO:0000318"/>
    <property type="project" value="GO_Central"/>
</dbReference>
<dbReference type="CDD" id="cd19108">
    <property type="entry name" value="AKR_AKR1C1-35"/>
    <property type="match status" value="1"/>
</dbReference>
<dbReference type="FunFam" id="3.20.20.100:FF:000003">
    <property type="entry name" value="Aldo-keto reductase family 1 member C3"/>
    <property type="match status" value="1"/>
</dbReference>
<dbReference type="Gene3D" id="3.20.20.100">
    <property type="entry name" value="NADP-dependent oxidoreductase domain"/>
    <property type="match status" value="1"/>
</dbReference>
<dbReference type="InterPro" id="IPR020471">
    <property type="entry name" value="AKR"/>
</dbReference>
<dbReference type="InterPro" id="IPR044482">
    <property type="entry name" value="AKR1C"/>
</dbReference>
<dbReference type="InterPro" id="IPR018170">
    <property type="entry name" value="Aldo/ket_reductase_CS"/>
</dbReference>
<dbReference type="InterPro" id="IPR023210">
    <property type="entry name" value="NADP_OxRdtase_dom"/>
</dbReference>
<dbReference type="InterPro" id="IPR036812">
    <property type="entry name" value="NADP_OxRdtase_dom_sf"/>
</dbReference>
<dbReference type="PANTHER" id="PTHR11732">
    <property type="entry name" value="ALDO/KETO REDUCTASE"/>
    <property type="match status" value="1"/>
</dbReference>
<dbReference type="Pfam" id="PF00248">
    <property type="entry name" value="Aldo_ket_red"/>
    <property type="match status" value="1"/>
</dbReference>
<dbReference type="PIRSF" id="PIRSF000097">
    <property type="entry name" value="AKR"/>
    <property type="match status" value="1"/>
</dbReference>
<dbReference type="PRINTS" id="PR00069">
    <property type="entry name" value="ALDKETRDTASE"/>
</dbReference>
<dbReference type="SUPFAM" id="SSF51430">
    <property type="entry name" value="NAD(P)-linked oxidoreductase"/>
    <property type="match status" value="1"/>
</dbReference>
<dbReference type="PROSITE" id="PS00798">
    <property type="entry name" value="ALDOKETO_REDUCTASE_1"/>
    <property type="match status" value="1"/>
</dbReference>
<dbReference type="PROSITE" id="PS00062">
    <property type="entry name" value="ALDOKETO_REDUCTASE_2"/>
    <property type="match status" value="1"/>
</dbReference>
<dbReference type="PROSITE" id="PS00063">
    <property type="entry name" value="ALDOKETO_REDUCTASE_3"/>
    <property type="match status" value="1"/>
</dbReference>
<accession>P52898</accession>
<accession>Q2KIT3</accession>
<reference key="1">
    <citation type="submission" date="1995-03" db="EMBL/GenBank/DDBJ databases">
        <authorList>
            <person name="Terada T."/>
            <person name="Hirofumi N."/>
            <person name="Hideki A."/>
        </authorList>
    </citation>
    <scope>NUCLEOTIDE SEQUENCE [MRNA]</scope>
    <source>
        <tissue>Liver</tissue>
    </source>
</reference>
<reference key="2">
    <citation type="submission" date="1996-11" db="EMBL/GenBank/DDBJ databases">
        <authorList>
            <person name="Suzuki T."/>
            <person name="Watanabe K."/>
            <person name="Fujii Y."/>
            <person name="Chen L."/>
            <person name="Hayaishi O."/>
        </authorList>
    </citation>
    <scope>NUCLEOTIDE SEQUENCE [MRNA]</scope>
    <source>
        <tissue>Liver</tissue>
    </source>
</reference>
<reference key="3">
    <citation type="submission" date="2006-01" db="EMBL/GenBank/DDBJ databases">
        <authorList>
            <consortium name="NIH - Mammalian Gene Collection (MGC) project"/>
        </authorList>
    </citation>
    <scope>NUCLEOTIDE SEQUENCE [LARGE SCALE MRNA]</scope>
    <source>
        <strain>Hereford</strain>
        <tissue>Testis</tissue>
    </source>
</reference>
<organism>
    <name type="scientific">Bos taurus</name>
    <name type="common">Bovine</name>
    <dbReference type="NCBI Taxonomy" id="9913"/>
    <lineage>
        <taxon>Eukaryota</taxon>
        <taxon>Metazoa</taxon>
        <taxon>Chordata</taxon>
        <taxon>Craniata</taxon>
        <taxon>Vertebrata</taxon>
        <taxon>Euteleostomi</taxon>
        <taxon>Mammalia</taxon>
        <taxon>Eutheria</taxon>
        <taxon>Laurasiatheria</taxon>
        <taxon>Artiodactyla</taxon>
        <taxon>Ruminantia</taxon>
        <taxon>Pecora</taxon>
        <taxon>Bovidae</taxon>
        <taxon>Bovinae</taxon>
        <taxon>Bos</taxon>
    </lineage>
</organism>
<protein>
    <recommendedName>
        <fullName>Dihydrodiol dehydrogenase 3</fullName>
        <ecNumber>1.-.-.-</ecNumber>
    </recommendedName>
    <alternativeName>
        <fullName>Prostaglandin F synthase</fullName>
    </alternativeName>
</protein>
<comment type="subcellular location">
    <subcellularLocation>
        <location evidence="2">Cytoplasm</location>
    </subcellularLocation>
</comment>
<comment type="similarity">
    <text evidence="2">Belongs to the aldo/keto reductase family.</text>
</comment>
<evidence type="ECO:0000250" key="1"/>
<evidence type="ECO:0000305" key="2"/>
<proteinExistence type="evidence at transcript level"/>